<name>CAR19_MOUSE</name>
<proteinExistence type="evidence at protein level"/>
<gene>
    <name evidence="4" type="primary">Card19</name>
</gene>
<protein>
    <recommendedName>
        <fullName evidence="4">Caspase recruitment domain-containing protein 19</fullName>
    </recommendedName>
    <alternativeName>
        <fullName evidence="2">Bcl10-interacting CARD protein</fullName>
        <shortName evidence="2">BinCARD</shortName>
    </alternativeName>
</protein>
<sequence length="183" mass="20936">MTDQTYCDRLVQDTPFLTGQGRLSEQQVDRIILQLNRYYPQILTNKEAEKFRNPKASLRVRLCDLLSHLQQRGERHCQEFYRALYIHAQPLHSHLPSRYSPQNSDCRELDWGIESRELSDRGPMSFLAGLGLAAGLALLLYCCPPDPKVLPGTRRVLAFSPVIIDRHVSRYLLAFLADDLGGL</sequence>
<dbReference type="EMBL" id="AK003526">
    <property type="protein sequence ID" value="BAB22838.1"/>
    <property type="molecule type" value="mRNA"/>
</dbReference>
<dbReference type="EMBL" id="AK154517">
    <property type="protein sequence ID" value="BAE32646.1"/>
    <property type="molecule type" value="mRNA"/>
</dbReference>
<dbReference type="CCDS" id="CCDS49260.1"/>
<dbReference type="RefSeq" id="NP_081014.1">
    <property type="nucleotide sequence ID" value="NM_026738.3"/>
</dbReference>
<dbReference type="SMR" id="Q9D1I2"/>
<dbReference type="BioGRID" id="212876">
    <property type="interactions" value="1"/>
</dbReference>
<dbReference type="FunCoup" id="Q9D1I2">
    <property type="interactions" value="703"/>
</dbReference>
<dbReference type="STRING" id="10090.ENSMUSP00000047569"/>
<dbReference type="PhosphoSitePlus" id="Q9D1I2"/>
<dbReference type="PaxDb" id="10090-ENSMUSP00000047569"/>
<dbReference type="ProteomicsDB" id="265334"/>
<dbReference type="Pumba" id="Q9D1I2"/>
<dbReference type="Antibodypedia" id="28349">
    <property type="antibodies" value="141 antibodies from 20 providers"/>
</dbReference>
<dbReference type="Ensembl" id="ENSMUST00000048946.7">
    <property type="protein sequence ID" value="ENSMUSP00000047569.7"/>
    <property type="gene ID" value="ENSMUSG00000037960.12"/>
</dbReference>
<dbReference type="GeneID" id="68480"/>
<dbReference type="KEGG" id="mmu:68480"/>
<dbReference type="UCSC" id="uc007qiy.1">
    <property type="organism name" value="mouse"/>
</dbReference>
<dbReference type="AGR" id="MGI:1915730"/>
<dbReference type="CTD" id="84270"/>
<dbReference type="MGI" id="MGI:1915730">
    <property type="gene designation" value="Card19"/>
</dbReference>
<dbReference type="VEuPathDB" id="HostDB:ENSMUSG00000037960"/>
<dbReference type="eggNOG" id="ENOG502RYMQ">
    <property type="taxonomic scope" value="Eukaryota"/>
</dbReference>
<dbReference type="GeneTree" id="ENSGT00390000016408"/>
<dbReference type="HOGENOM" id="CLU_103797_0_0_1"/>
<dbReference type="InParanoid" id="Q9D1I2"/>
<dbReference type="OMA" id="ADSKCTN"/>
<dbReference type="OrthoDB" id="50010at9989"/>
<dbReference type="PhylomeDB" id="Q9D1I2"/>
<dbReference type="TreeFam" id="TF335747"/>
<dbReference type="BioGRID-ORCS" id="68480">
    <property type="hits" value="2 hits in 45 CRISPR screens"/>
</dbReference>
<dbReference type="ChiTaRS" id="Card19">
    <property type="organism name" value="mouse"/>
</dbReference>
<dbReference type="PRO" id="PR:Q9D1I2"/>
<dbReference type="Proteomes" id="UP000000589">
    <property type="component" value="Chromosome 13"/>
</dbReference>
<dbReference type="RNAct" id="Q9D1I2">
    <property type="molecule type" value="protein"/>
</dbReference>
<dbReference type="Bgee" id="ENSMUSG00000037960">
    <property type="expression patterns" value="Expressed in granulocyte and 198 other cell types or tissues"/>
</dbReference>
<dbReference type="ExpressionAtlas" id="Q9D1I2">
    <property type="expression patterns" value="baseline and differential"/>
</dbReference>
<dbReference type="GO" id="GO:0005789">
    <property type="term" value="C:endoplasmic reticulum membrane"/>
    <property type="evidence" value="ECO:0007669"/>
    <property type="project" value="UniProtKB-SubCell"/>
</dbReference>
<dbReference type="GO" id="GO:0031966">
    <property type="term" value="C:mitochondrial membrane"/>
    <property type="evidence" value="ECO:0007669"/>
    <property type="project" value="UniProtKB-SubCell"/>
</dbReference>
<dbReference type="CDD" id="cd13785">
    <property type="entry name" value="CARD_BinCARD_like"/>
    <property type="match status" value="1"/>
</dbReference>
<dbReference type="FunFam" id="1.10.533.10:FF:000015">
    <property type="entry name" value="Caspase recruitment domain-containing protein 19"/>
    <property type="match status" value="1"/>
</dbReference>
<dbReference type="Gene3D" id="1.10.533.10">
    <property type="entry name" value="Death Domain, Fas"/>
    <property type="match status" value="1"/>
</dbReference>
<dbReference type="InterPro" id="IPR043574">
    <property type="entry name" value="CARD19"/>
</dbReference>
<dbReference type="InterPro" id="IPR042146">
    <property type="entry name" value="CARD_BinCARD"/>
</dbReference>
<dbReference type="InterPro" id="IPR011029">
    <property type="entry name" value="DEATH-like_dom_sf"/>
</dbReference>
<dbReference type="PANTHER" id="PTHR34765">
    <property type="entry name" value="CASPASE RECRUITMENT DOMAIN-CONTAINING PROTEIN 19"/>
    <property type="match status" value="1"/>
</dbReference>
<dbReference type="PANTHER" id="PTHR34765:SF1">
    <property type="entry name" value="CASPASE RECRUITMENT DOMAIN-CONTAINING PROTEIN 19"/>
    <property type="match status" value="1"/>
</dbReference>
<dbReference type="SUPFAM" id="SSF47986">
    <property type="entry name" value="DEATH domain"/>
    <property type="match status" value="1"/>
</dbReference>
<organism>
    <name type="scientific">Mus musculus</name>
    <name type="common">Mouse</name>
    <dbReference type="NCBI Taxonomy" id="10090"/>
    <lineage>
        <taxon>Eukaryota</taxon>
        <taxon>Metazoa</taxon>
        <taxon>Chordata</taxon>
        <taxon>Craniata</taxon>
        <taxon>Vertebrata</taxon>
        <taxon>Euteleostomi</taxon>
        <taxon>Mammalia</taxon>
        <taxon>Eutheria</taxon>
        <taxon>Euarchontoglires</taxon>
        <taxon>Glires</taxon>
        <taxon>Rodentia</taxon>
        <taxon>Myomorpha</taxon>
        <taxon>Muroidea</taxon>
        <taxon>Muridae</taxon>
        <taxon>Murinae</taxon>
        <taxon>Mus</taxon>
        <taxon>Mus</taxon>
    </lineage>
</organism>
<accession>Q9D1I2</accession>
<accession>Q3U3Y9</accession>
<feature type="chain" id="PRO_0000064928" description="Caspase recruitment domain-containing protein 19">
    <location>
        <begin position="1"/>
        <end position="183"/>
    </location>
</feature>
<feature type="transmembrane region" description="Helical" evidence="3">
    <location>
        <begin position="122"/>
        <end position="142"/>
    </location>
</feature>
<feature type="domain" description="CARD">
    <location>
        <begin position="8"/>
        <end position="99"/>
    </location>
</feature>
<feature type="disulfide bond" description="Redox-active" evidence="1">
    <location>
        <begin position="7"/>
        <end position="77"/>
    </location>
</feature>
<evidence type="ECO:0000250" key="1"/>
<evidence type="ECO:0000250" key="2">
    <source>
        <dbReference type="UniProtKB" id="Q96LW7"/>
    </source>
</evidence>
<evidence type="ECO:0000255" key="3"/>
<evidence type="ECO:0000312" key="4">
    <source>
        <dbReference type="MGI" id="MGI:1915730"/>
    </source>
</evidence>
<comment type="function">
    <text evidence="2">Plays a role in inhibiting the effects of BCL10-induced activation of NF-kappa-B.</text>
</comment>
<comment type="subunit">
    <text evidence="2">Associates with BCL10 by CARD-CARD interaction.</text>
</comment>
<comment type="subcellular location">
    <subcellularLocation>
        <location evidence="1">Endoplasmic reticulum membrane</location>
        <topology evidence="1">Single-pass membrane protein</topology>
    </subcellularLocation>
    <subcellularLocation>
        <location evidence="1">Mitochondrion membrane</location>
        <topology>Single-pass membrane protein</topology>
    </subcellularLocation>
</comment>
<keyword id="KW-1015">Disulfide bond</keyword>
<keyword id="KW-0256">Endoplasmic reticulum</keyword>
<keyword id="KW-0472">Membrane</keyword>
<keyword id="KW-0496">Mitochondrion</keyword>
<keyword id="KW-1185">Reference proteome</keyword>
<keyword id="KW-0812">Transmembrane</keyword>
<keyword id="KW-1133">Transmembrane helix</keyword>
<reference key="1">
    <citation type="journal article" date="2005" name="Science">
        <title>The transcriptional landscape of the mammalian genome.</title>
        <authorList>
            <person name="Carninci P."/>
            <person name="Kasukawa T."/>
            <person name="Katayama S."/>
            <person name="Gough J."/>
            <person name="Frith M.C."/>
            <person name="Maeda N."/>
            <person name="Oyama R."/>
            <person name="Ravasi T."/>
            <person name="Lenhard B."/>
            <person name="Wells C."/>
            <person name="Kodzius R."/>
            <person name="Shimokawa K."/>
            <person name="Bajic V.B."/>
            <person name="Brenner S.E."/>
            <person name="Batalov S."/>
            <person name="Forrest A.R."/>
            <person name="Zavolan M."/>
            <person name="Davis M.J."/>
            <person name="Wilming L.G."/>
            <person name="Aidinis V."/>
            <person name="Allen J.E."/>
            <person name="Ambesi-Impiombato A."/>
            <person name="Apweiler R."/>
            <person name="Aturaliya R.N."/>
            <person name="Bailey T.L."/>
            <person name="Bansal M."/>
            <person name="Baxter L."/>
            <person name="Beisel K.W."/>
            <person name="Bersano T."/>
            <person name="Bono H."/>
            <person name="Chalk A.M."/>
            <person name="Chiu K.P."/>
            <person name="Choudhary V."/>
            <person name="Christoffels A."/>
            <person name="Clutterbuck D.R."/>
            <person name="Crowe M.L."/>
            <person name="Dalla E."/>
            <person name="Dalrymple B.P."/>
            <person name="de Bono B."/>
            <person name="Della Gatta G."/>
            <person name="di Bernardo D."/>
            <person name="Down T."/>
            <person name="Engstrom P."/>
            <person name="Fagiolini M."/>
            <person name="Faulkner G."/>
            <person name="Fletcher C.F."/>
            <person name="Fukushima T."/>
            <person name="Furuno M."/>
            <person name="Futaki S."/>
            <person name="Gariboldi M."/>
            <person name="Georgii-Hemming P."/>
            <person name="Gingeras T.R."/>
            <person name="Gojobori T."/>
            <person name="Green R.E."/>
            <person name="Gustincich S."/>
            <person name="Harbers M."/>
            <person name="Hayashi Y."/>
            <person name="Hensch T.K."/>
            <person name="Hirokawa N."/>
            <person name="Hill D."/>
            <person name="Huminiecki L."/>
            <person name="Iacono M."/>
            <person name="Ikeo K."/>
            <person name="Iwama A."/>
            <person name="Ishikawa T."/>
            <person name="Jakt M."/>
            <person name="Kanapin A."/>
            <person name="Katoh M."/>
            <person name="Kawasawa Y."/>
            <person name="Kelso J."/>
            <person name="Kitamura H."/>
            <person name="Kitano H."/>
            <person name="Kollias G."/>
            <person name="Krishnan S.P."/>
            <person name="Kruger A."/>
            <person name="Kummerfeld S.K."/>
            <person name="Kurochkin I.V."/>
            <person name="Lareau L.F."/>
            <person name="Lazarevic D."/>
            <person name="Lipovich L."/>
            <person name="Liu J."/>
            <person name="Liuni S."/>
            <person name="McWilliam S."/>
            <person name="Madan Babu M."/>
            <person name="Madera M."/>
            <person name="Marchionni L."/>
            <person name="Matsuda H."/>
            <person name="Matsuzawa S."/>
            <person name="Miki H."/>
            <person name="Mignone F."/>
            <person name="Miyake S."/>
            <person name="Morris K."/>
            <person name="Mottagui-Tabar S."/>
            <person name="Mulder N."/>
            <person name="Nakano N."/>
            <person name="Nakauchi H."/>
            <person name="Ng P."/>
            <person name="Nilsson R."/>
            <person name="Nishiguchi S."/>
            <person name="Nishikawa S."/>
            <person name="Nori F."/>
            <person name="Ohara O."/>
            <person name="Okazaki Y."/>
            <person name="Orlando V."/>
            <person name="Pang K.C."/>
            <person name="Pavan W.J."/>
            <person name="Pavesi G."/>
            <person name="Pesole G."/>
            <person name="Petrovsky N."/>
            <person name="Piazza S."/>
            <person name="Reed J."/>
            <person name="Reid J.F."/>
            <person name="Ring B.Z."/>
            <person name="Ringwald M."/>
            <person name="Rost B."/>
            <person name="Ruan Y."/>
            <person name="Salzberg S.L."/>
            <person name="Sandelin A."/>
            <person name="Schneider C."/>
            <person name="Schoenbach C."/>
            <person name="Sekiguchi K."/>
            <person name="Semple C.A."/>
            <person name="Seno S."/>
            <person name="Sessa L."/>
            <person name="Sheng Y."/>
            <person name="Shibata Y."/>
            <person name="Shimada H."/>
            <person name="Shimada K."/>
            <person name="Silva D."/>
            <person name="Sinclair B."/>
            <person name="Sperling S."/>
            <person name="Stupka E."/>
            <person name="Sugiura K."/>
            <person name="Sultana R."/>
            <person name="Takenaka Y."/>
            <person name="Taki K."/>
            <person name="Tammoja K."/>
            <person name="Tan S.L."/>
            <person name="Tang S."/>
            <person name="Taylor M.S."/>
            <person name="Tegner J."/>
            <person name="Teichmann S.A."/>
            <person name="Ueda H.R."/>
            <person name="van Nimwegen E."/>
            <person name="Verardo R."/>
            <person name="Wei C.L."/>
            <person name="Yagi K."/>
            <person name="Yamanishi H."/>
            <person name="Zabarovsky E."/>
            <person name="Zhu S."/>
            <person name="Zimmer A."/>
            <person name="Hide W."/>
            <person name="Bult C."/>
            <person name="Grimmond S.M."/>
            <person name="Teasdale R.D."/>
            <person name="Liu E.T."/>
            <person name="Brusic V."/>
            <person name="Quackenbush J."/>
            <person name="Wahlestedt C."/>
            <person name="Mattick J.S."/>
            <person name="Hume D.A."/>
            <person name="Kai C."/>
            <person name="Sasaki D."/>
            <person name="Tomaru Y."/>
            <person name="Fukuda S."/>
            <person name="Kanamori-Katayama M."/>
            <person name="Suzuki M."/>
            <person name="Aoki J."/>
            <person name="Arakawa T."/>
            <person name="Iida J."/>
            <person name="Imamura K."/>
            <person name="Itoh M."/>
            <person name="Kato T."/>
            <person name="Kawaji H."/>
            <person name="Kawagashira N."/>
            <person name="Kawashima T."/>
            <person name="Kojima M."/>
            <person name="Kondo S."/>
            <person name="Konno H."/>
            <person name="Nakano K."/>
            <person name="Ninomiya N."/>
            <person name="Nishio T."/>
            <person name="Okada M."/>
            <person name="Plessy C."/>
            <person name="Shibata K."/>
            <person name="Shiraki T."/>
            <person name="Suzuki S."/>
            <person name="Tagami M."/>
            <person name="Waki K."/>
            <person name="Watahiki A."/>
            <person name="Okamura-Oho Y."/>
            <person name="Suzuki H."/>
            <person name="Kawai J."/>
            <person name="Hayashizaki Y."/>
        </authorList>
    </citation>
    <scope>NUCLEOTIDE SEQUENCE [LARGE SCALE MRNA]</scope>
    <source>
        <strain>C57BL/6J</strain>
        <strain>NOD</strain>
    </source>
</reference>
<reference key="2">
    <citation type="journal article" date="2010" name="Cell">
        <title>A tissue-specific atlas of mouse protein phosphorylation and expression.</title>
        <authorList>
            <person name="Huttlin E.L."/>
            <person name="Jedrychowski M.P."/>
            <person name="Elias J.E."/>
            <person name="Goswami T."/>
            <person name="Rad R."/>
            <person name="Beausoleil S.A."/>
            <person name="Villen J."/>
            <person name="Haas W."/>
            <person name="Sowa M.E."/>
            <person name="Gygi S.P."/>
        </authorList>
    </citation>
    <scope>IDENTIFICATION BY MASS SPECTROMETRY [LARGE SCALE ANALYSIS]</scope>
    <source>
        <tissue>Brown adipose tissue</tissue>
        <tissue>Kidney</tissue>
        <tissue>Lung</tissue>
    </source>
</reference>